<accession>B3GYE5</accession>
<name>MLTF_ACTP7</name>
<dbReference type="EC" id="4.2.2.n1" evidence="1"/>
<dbReference type="EMBL" id="CP001091">
    <property type="protein sequence ID" value="ACE62069.1"/>
    <property type="molecule type" value="Genomic_DNA"/>
</dbReference>
<dbReference type="RefSeq" id="WP_005608600.1">
    <property type="nucleotide sequence ID" value="NC_010939.1"/>
</dbReference>
<dbReference type="SMR" id="B3GYE5"/>
<dbReference type="CAZy" id="GH23">
    <property type="family name" value="Glycoside Hydrolase Family 23"/>
</dbReference>
<dbReference type="KEGG" id="apa:APP7_1417"/>
<dbReference type="HOGENOM" id="CLU_027494_0_1_6"/>
<dbReference type="Proteomes" id="UP000001226">
    <property type="component" value="Chromosome"/>
</dbReference>
<dbReference type="GO" id="GO:0009279">
    <property type="term" value="C:cell outer membrane"/>
    <property type="evidence" value="ECO:0007669"/>
    <property type="project" value="UniProtKB-SubCell"/>
</dbReference>
<dbReference type="GO" id="GO:0008933">
    <property type="term" value="F:peptidoglycan lytic transglycosylase activity"/>
    <property type="evidence" value="ECO:0007669"/>
    <property type="project" value="UniProtKB-UniRule"/>
</dbReference>
<dbReference type="GO" id="GO:0016998">
    <property type="term" value="P:cell wall macromolecule catabolic process"/>
    <property type="evidence" value="ECO:0007669"/>
    <property type="project" value="UniProtKB-UniRule"/>
</dbReference>
<dbReference type="GO" id="GO:0071555">
    <property type="term" value="P:cell wall organization"/>
    <property type="evidence" value="ECO:0007669"/>
    <property type="project" value="UniProtKB-KW"/>
</dbReference>
<dbReference type="GO" id="GO:0009253">
    <property type="term" value="P:peptidoglycan catabolic process"/>
    <property type="evidence" value="ECO:0007669"/>
    <property type="project" value="TreeGrafter"/>
</dbReference>
<dbReference type="CDD" id="cd13403">
    <property type="entry name" value="MLTF-like"/>
    <property type="match status" value="1"/>
</dbReference>
<dbReference type="CDD" id="cd01009">
    <property type="entry name" value="PBP2_YfhD_N"/>
    <property type="match status" value="1"/>
</dbReference>
<dbReference type="Gene3D" id="1.10.530.10">
    <property type="match status" value="1"/>
</dbReference>
<dbReference type="Gene3D" id="3.40.190.10">
    <property type="entry name" value="Periplasmic binding protein-like II"/>
    <property type="match status" value="2"/>
</dbReference>
<dbReference type="HAMAP" id="MF_02016">
    <property type="entry name" value="MltF"/>
    <property type="match status" value="1"/>
</dbReference>
<dbReference type="InterPro" id="IPR023346">
    <property type="entry name" value="Lysozyme-like_dom_sf"/>
</dbReference>
<dbReference type="InterPro" id="IPR023703">
    <property type="entry name" value="MltF"/>
</dbReference>
<dbReference type="InterPro" id="IPR001638">
    <property type="entry name" value="Solute-binding_3/MltF_N"/>
</dbReference>
<dbReference type="InterPro" id="IPR000189">
    <property type="entry name" value="Transglyc_AS"/>
</dbReference>
<dbReference type="InterPro" id="IPR008258">
    <property type="entry name" value="Transglycosylase_SLT_dom_1"/>
</dbReference>
<dbReference type="NCBIfam" id="NF008112">
    <property type="entry name" value="PRK10859.1"/>
    <property type="match status" value="1"/>
</dbReference>
<dbReference type="PANTHER" id="PTHR35936">
    <property type="entry name" value="MEMBRANE-BOUND LYTIC MUREIN TRANSGLYCOSYLASE F"/>
    <property type="match status" value="1"/>
</dbReference>
<dbReference type="PANTHER" id="PTHR35936:SF32">
    <property type="entry name" value="MEMBRANE-BOUND LYTIC MUREIN TRANSGLYCOSYLASE F"/>
    <property type="match status" value="1"/>
</dbReference>
<dbReference type="Pfam" id="PF00497">
    <property type="entry name" value="SBP_bac_3"/>
    <property type="match status" value="1"/>
</dbReference>
<dbReference type="Pfam" id="PF01464">
    <property type="entry name" value="SLT"/>
    <property type="match status" value="1"/>
</dbReference>
<dbReference type="SMART" id="SM00062">
    <property type="entry name" value="PBPb"/>
    <property type="match status" value="1"/>
</dbReference>
<dbReference type="SUPFAM" id="SSF53955">
    <property type="entry name" value="Lysozyme-like"/>
    <property type="match status" value="1"/>
</dbReference>
<dbReference type="SUPFAM" id="SSF53850">
    <property type="entry name" value="Periplasmic binding protein-like II"/>
    <property type="match status" value="1"/>
</dbReference>
<dbReference type="PROSITE" id="PS00922">
    <property type="entry name" value="TRANSGLYCOSYLASE"/>
    <property type="match status" value="1"/>
</dbReference>
<reference key="1">
    <citation type="submission" date="2008-06" db="EMBL/GenBank/DDBJ databases">
        <title>Genome and proteome analysis of A. pleuropneumoniae serotype 7.</title>
        <authorList>
            <person name="Linke B."/>
            <person name="Buettner F."/>
            <person name="Martinez-Arias R."/>
            <person name="Goesmann A."/>
            <person name="Baltes N."/>
            <person name="Tegetmeyer H."/>
            <person name="Singh M."/>
            <person name="Gerlach G.F."/>
        </authorList>
    </citation>
    <scope>NUCLEOTIDE SEQUENCE [LARGE SCALE GENOMIC DNA]</scope>
    <source>
        <strain>AP76</strain>
    </source>
</reference>
<sequence>MKGLIARFIAGFALLLWAWDMVFPWQQLMQAEENRYNQIQQRKILRVGMVNHPLSYFIGAEGTAGIEYELAKSFANYLDVRLDIKTFDNSEQLFSALKDNKVDIAAAGLLYQPELSKQFQIGSAYYSASWQVVYKKGSNRPYKLSELEGDLIIPAGSAVLPILQRLKEDNPKLSWQTTNQFTQEELLLQVAEGKIPYTVGISVDISAAQHIRPNIAVGFDLTDEAPVLWYLPNSSYSELQAAVLDFMNHANETGLISRIEEKYFNHLAHFDYVDIQSYLKAIKLVLPKYQSLFEKYRGDLEWQMLAAIAYQESHWDPNATSPTGVRGMMMLTRDTAERMKITDRTSAEQSIRAGSEYLHMLMRQIPETVPKEDRIWYGLAAYNMGLGHLLDVRRLTRQLGGNPDNWLDVKKNLPLLAEKRHYSGLKYGYARGFEAFQYVENIRRYYSSIINHQRVEEQQIQNNEEQSSVPQEISKESDSTLKE</sequence>
<comment type="function">
    <text evidence="1">Murein-degrading enzyme that degrades murein glycan strands and insoluble, high-molecular weight murein sacculi, with the concomitant formation of a 1,6-anhydromuramoyl product. Lytic transglycosylases (LTs) play an integral role in the metabolism of the peptidoglycan (PG) sacculus. Their lytic action creates space within the PG sacculus to allow for its expansion as well as for the insertion of various structures such as secretion systems and flagella.</text>
</comment>
<comment type="catalytic activity">
    <reaction evidence="1">
        <text>Exolytic cleavage of the (1-&gt;4)-beta-glycosidic linkage between N-acetylmuramic acid (MurNAc) and N-acetylglucosamine (GlcNAc) residues in peptidoglycan, from either the reducing or the non-reducing ends of the peptidoglycan chains, with concomitant formation of a 1,6-anhydrobond in the MurNAc residue.</text>
        <dbReference type="EC" id="4.2.2.n1"/>
    </reaction>
</comment>
<comment type="subcellular location">
    <subcellularLocation>
        <location>Cell outer membrane</location>
        <topology>Peripheral membrane protein</topology>
    </subcellularLocation>
    <text evidence="1">Attached to the inner leaflet of the outer membrane.</text>
</comment>
<comment type="domain">
    <text evidence="1">The N-terminal domain does not have lytic activity and probably modulates enzymatic activity. The C-terminal domain is the catalytic active domain.</text>
</comment>
<comment type="similarity">
    <text evidence="1">In the N-terminal section; belongs to the bacterial solute-binding protein 3 family.</text>
</comment>
<comment type="similarity">
    <text evidence="1">In the C-terminal section; belongs to the transglycosylase Slt family.</text>
</comment>
<protein>
    <recommendedName>
        <fullName evidence="1">Membrane-bound lytic murein transglycosylase F</fullName>
        <ecNumber evidence="1">4.2.2.n1</ecNumber>
    </recommendedName>
    <alternativeName>
        <fullName evidence="1">Murein lyase F</fullName>
    </alternativeName>
</protein>
<keyword id="KW-0998">Cell outer membrane</keyword>
<keyword id="KW-0961">Cell wall biogenesis/degradation</keyword>
<keyword id="KW-0456">Lyase</keyword>
<keyword id="KW-0472">Membrane</keyword>
<keyword id="KW-0732">Signal</keyword>
<evidence type="ECO:0000255" key="1">
    <source>
        <dbReference type="HAMAP-Rule" id="MF_02016"/>
    </source>
</evidence>
<evidence type="ECO:0000256" key="2">
    <source>
        <dbReference type="SAM" id="MobiDB-lite"/>
    </source>
</evidence>
<feature type="signal peptide" evidence="1">
    <location>
        <begin position="1"/>
        <end position="18"/>
    </location>
</feature>
<feature type="chain" id="PRO_0000353914" description="Membrane-bound lytic murein transglycosylase F">
    <location>
        <begin position="19"/>
        <end position="483"/>
    </location>
</feature>
<feature type="region of interest" description="Non-LT domain" evidence="1">
    <location>
        <begin position="19"/>
        <end position="267"/>
    </location>
</feature>
<feature type="region of interest" description="LT domain" evidence="1">
    <location>
        <begin position="269"/>
        <end position="483"/>
    </location>
</feature>
<feature type="region of interest" description="Disordered" evidence="2">
    <location>
        <begin position="459"/>
        <end position="483"/>
    </location>
</feature>
<feature type="compositionally biased region" description="Basic and acidic residues" evidence="2">
    <location>
        <begin position="473"/>
        <end position="483"/>
    </location>
</feature>
<feature type="active site" evidence="1">
    <location>
        <position position="312"/>
    </location>
</feature>
<proteinExistence type="inferred from homology"/>
<gene>
    <name evidence="1" type="primary">mltF</name>
    <name type="ordered locus">APP7_1417</name>
</gene>
<organism>
    <name type="scientific">Actinobacillus pleuropneumoniae serotype 7 (strain AP76)</name>
    <dbReference type="NCBI Taxonomy" id="537457"/>
    <lineage>
        <taxon>Bacteria</taxon>
        <taxon>Pseudomonadati</taxon>
        <taxon>Pseudomonadota</taxon>
        <taxon>Gammaproteobacteria</taxon>
        <taxon>Pasteurellales</taxon>
        <taxon>Pasteurellaceae</taxon>
        <taxon>Actinobacillus</taxon>
    </lineage>
</organism>